<evidence type="ECO:0000250" key="1">
    <source>
        <dbReference type="UniProtKB" id="Q10S58"/>
    </source>
</evidence>
<evidence type="ECO:0000255" key="2"/>
<evidence type="ECO:0000303" key="3">
    <source>
    </source>
</evidence>
<evidence type="ECO:0000305" key="4"/>
<organism>
    <name type="scientific">Pseudotsuga menziesii</name>
    <name type="common">Douglas-fir</name>
    <name type="synonym">Abies menziesii</name>
    <dbReference type="NCBI Taxonomy" id="3357"/>
    <lineage>
        <taxon>Eukaryota</taxon>
        <taxon>Viridiplantae</taxon>
        <taxon>Streptophyta</taxon>
        <taxon>Embryophyta</taxon>
        <taxon>Tracheophyta</taxon>
        <taxon>Spermatophyta</taxon>
        <taxon>Pinopsida</taxon>
        <taxon>Pinidae</taxon>
        <taxon>Conifers I</taxon>
        <taxon>Pinales</taxon>
        <taxon>Pinaceae</taxon>
        <taxon>Pseudotsuga</taxon>
    </lineage>
</organism>
<keyword id="KW-0012">Acyltransferase</keyword>
<keyword id="KW-0028">Amino-acid biosynthesis</keyword>
<keyword id="KW-0808">Transferase</keyword>
<protein>
    <recommendedName>
        <fullName evidence="1">Probable serine acetyltransferase</fullName>
        <ecNumber>2.3.1.30</ecNumber>
    </recommendedName>
</protein>
<proteinExistence type="evidence at protein level"/>
<sequence>IANVFAVDIHPAAR</sequence>
<name>SAT_PSEMZ</name>
<accession>P85931</accession>
<feature type="chain" id="PRO_0000397951" description="Probable serine acetyltransferase">
    <location>
        <begin position="1" status="less than"/>
        <end position="14" status="greater than"/>
    </location>
</feature>
<feature type="non-terminal residue" evidence="3">
    <location>
        <position position="1"/>
    </location>
</feature>
<feature type="non-terminal residue" evidence="3">
    <location>
        <position position="14"/>
    </location>
</feature>
<reference evidence="4" key="1">
    <citation type="journal article" date="2008" name="J. Proteomics">
        <title>A proteomics approach to identify proteins differentially expressed in Douglas-fir seedlings infected by Phellinus sulphurascens.</title>
        <authorList>
            <person name="Islam M.A."/>
            <person name="Sturrock R.N."/>
            <person name="Ekramoddoullah A.K.M."/>
        </authorList>
    </citation>
    <scope>IDENTIFICATION BY MASS SPECTROMETRY</scope>
</reference>
<dbReference type="EC" id="2.3.1.30"/>
<dbReference type="UniPathway" id="UPA00136">
    <property type="reaction ID" value="UER00199"/>
</dbReference>
<dbReference type="GO" id="GO:0009001">
    <property type="term" value="F:serine O-acetyltransferase activity"/>
    <property type="evidence" value="ECO:0007669"/>
    <property type="project" value="UniProtKB-EC"/>
</dbReference>
<dbReference type="GO" id="GO:0019344">
    <property type="term" value="P:cysteine biosynthetic process"/>
    <property type="evidence" value="ECO:0007669"/>
    <property type="project" value="UniProtKB-UniPathway"/>
</dbReference>
<comment type="catalytic activity">
    <reaction evidence="1">
        <text>L-serine + acetyl-CoA = O-acetyl-L-serine + CoA</text>
        <dbReference type="Rhea" id="RHEA:24560"/>
        <dbReference type="ChEBI" id="CHEBI:33384"/>
        <dbReference type="ChEBI" id="CHEBI:57287"/>
        <dbReference type="ChEBI" id="CHEBI:57288"/>
        <dbReference type="ChEBI" id="CHEBI:58340"/>
        <dbReference type="EC" id="2.3.1.30"/>
    </reaction>
</comment>
<comment type="pathway">
    <text evidence="1">Amino-acid biosynthesis; L-cysteine biosynthesis; L-cysteine from L-serine: step 1/2.</text>
</comment>
<comment type="subunit">
    <text evidence="1">Homomultimer.</text>
</comment>
<comment type="similarity">
    <text evidence="2">Belongs to the transferase hexapeptide repeat family.</text>
</comment>